<comment type="function">
    <text evidence="1">Catalyzes the conversion of 1-hydroxy-2-methyl-2-(E)-butenyl 4-diphosphate (HMBPP) into a mixture of isopentenyl diphosphate (IPP) and dimethylallyl diphosphate (DMAPP). Acts in the terminal step of the DOXP/MEP pathway for isoprenoid precursor biosynthesis.</text>
</comment>
<comment type="catalytic activity">
    <reaction evidence="1">
        <text>isopentenyl diphosphate + 2 oxidized [2Fe-2S]-[ferredoxin] + H2O = (2E)-4-hydroxy-3-methylbut-2-enyl diphosphate + 2 reduced [2Fe-2S]-[ferredoxin] + 2 H(+)</text>
        <dbReference type="Rhea" id="RHEA:24488"/>
        <dbReference type="Rhea" id="RHEA-COMP:10000"/>
        <dbReference type="Rhea" id="RHEA-COMP:10001"/>
        <dbReference type="ChEBI" id="CHEBI:15377"/>
        <dbReference type="ChEBI" id="CHEBI:15378"/>
        <dbReference type="ChEBI" id="CHEBI:33737"/>
        <dbReference type="ChEBI" id="CHEBI:33738"/>
        <dbReference type="ChEBI" id="CHEBI:128753"/>
        <dbReference type="ChEBI" id="CHEBI:128769"/>
        <dbReference type="EC" id="1.17.7.4"/>
    </reaction>
</comment>
<comment type="catalytic activity">
    <reaction evidence="1">
        <text>dimethylallyl diphosphate + 2 oxidized [2Fe-2S]-[ferredoxin] + H2O = (2E)-4-hydroxy-3-methylbut-2-enyl diphosphate + 2 reduced [2Fe-2S]-[ferredoxin] + 2 H(+)</text>
        <dbReference type="Rhea" id="RHEA:24825"/>
        <dbReference type="Rhea" id="RHEA-COMP:10000"/>
        <dbReference type="Rhea" id="RHEA-COMP:10001"/>
        <dbReference type="ChEBI" id="CHEBI:15377"/>
        <dbReference type="ChEBI" id="CHEBI:15378"/>
        <dbReference type="ChEBI" id="CHEBI:33737"/>
        <dbReference type="ChEBI" id="CHEBI:33738"/>
        <dbReference type="ChEBI" id="CHEBI:57623"/>
        <dbReference type="ChEBI" id="CHEBI:128753"/>
        <dbReference type="EC" id="1.17.7.4"/>
    </reaction>
</comment>
<comment type="cofactor">
    <cofactor evidence="1">
        <name>[4Fe-4S] cluster</name>
        <dbReference type="ChEBI" id="CHEBI:49883"/>
    </cofactor>
    <text evidence="1">Binds 1 [4Fe-4S] cluster per subunit.</text>
</comment>
<comment type="pathway">
    <text evidence="1">Isoprenoid biosynthesis; dimethylallyl diphosphate biosynthesis; dimethylallyl diphosphate from (2E)-4-hydroxy-3-methylbutenyl diphosphate: step 1/1.</text>
</comment>
<comment type="pathway">
    <text evidence="1">Isoprenoid biosynthesis; isopentenyl diphosphate biosynthesis via DXP pathway; isopentenyl diphosphate from 1-deoxy-D-xylulose 5-phosphate: step 6/6.</text>
</comment>
<comment type="subunit">
    <text evidence="1">Homodimer.</text>
</comment>
<comment type="similarity">
    <text evidence="1">Belongs to the IspH family.</text>
</comment>
<keyword id="KW-0004">4Fe-4S</keyword>
<keyword id="KW-0408">Iron</keyword>
<keyword id="KW-0411">Iron-sulfur</keyword>
<keyword id="KW-0414">Isoprene biosynthesis</keyword>
<keyword id="KW-0479">Metal-binding</keyword>
<keyword id="KW-0560">Oxidoreductase</keyword>
<accession>B4TIE9</accession>
<feature type="chain" id="PRO_1000098973" description="4-hydroxy-3-methylbut-2-enyl diphosphate reductase">
    <location>
        <begin position="1"/>
        <end position="316"/>
    </location>
</feature>
<feature type="active site" description="Proton donor" evidence="1">
    <location>
        <position position="126"/>
    </location>
</feature>
<feature type="binding site" evidence="1">
    <location>
        <position position="12"/>
    </location>
    <ligand>
        <name>[4Fe-4S] cluster</name>
        <dbReference type="ChEBI" id="CHEBI:49883"/>
    </ligand>
</feature>
<feature type="binding site" evidence="1">
    <location>
        <position position="41"/>
    </location>
    <ligand>
        <name>(2E)-4-hydroxy-3-methylbut-2-enyl diphosphate</name>
        <dbReference type="ChEBI" id="CHEBI:128753"/>
    </ligand>
</feature>
<feature type="binding site" evidence="1">
    <location>
        <position position="41"/>
    </location>
    <ligand>
        <name>dimethylallyl diphosphate</name>
        <dbReference type="ChEBI" id="CHEBI:57623"/>
    </ligand>
</feature>
<feature type="binding site" evidence="1">
    <location>
        <position position="41"/>
    </location>
    <ligand>
        <name>isopentenyl diphosphate</name>
        <dbReference type="ChEBI" id="CHEBI:128769"/>
    </ligand>
</feature>
<feature type="binding site" evidence="1">
    <location>
        <position position="74"/>
    </location>
    <ligand>
        <name>(2E)-4-hydroxy-3-methylbut-2-enyl diphosphate</name>
        <dbReference type="ChEBI" id="CHEBI:128753"/>
    </ligand>
</feature>
<feature type="binding site" evidence="1">
    <location>
        <position position="74"/>
    </location>
    <ligand>
        <name>dimethylallyl diphosphate</name>
        <dbReference type="ChEBI" id="CHEBI:57623"/>
    </ligand>
</feature>
<feature type="binding site" evidence="1">
    <location>
        <position position="74"/>
    </location>
    <ligand>
        <name>isopentenyl diphosphate</name>
        <dbReference type="ChEBI" id="CHEBI:128769"/>
    </ligand>
</feature>
<feature type="binding site" evidence="1">
    <location>
        <position position="96"/>
    </location>
    <ligand>
        <name>[4Fe-4S] cluster</name>
        <dbReference type="ChEBI" id="CHEBI:49883"/>
    </ligand>
</feature>
<feature type="binding site" evidence="1">
    <location>
        <position position="124"/>
    </location>
    <ligand>
        <name>(2E)-4-hydroxy-3-methylbut-2-enyl diphosphate</name>
        <dbReference type="ChEBI" id="CHEBI:128753"/>
    </ligand>
</feature>
<feature type="binding site" evidence="1">
    <location>
        <position position="124"/>
    </location>
    <ligand>
        <name>dimethylallyl diphosphate</name>
        <dbReference type="ChEBI" id="CHEBI:57623"/>
    </ligand>
</feature>
<feature type="binding site" evidence="1">
    <location>
        <position position="124"/>
    </location>
    <ligand>
        <name>isopentenyl diphosphate</name>
        <dbReference type="ChEBI" id="CHEBI:128769"/>
    </ligand>
</feature>
<feature type="binding site" evidence="1">
    <location>
        <position position="167"/>
    </location>
    <ligand>
        <name>(2E)-4-hydroxy-3-methylbut-2-enyl diphosphate</name>
        <dbReference type="ChEBI" id="CHEBI:128753"/>
    </ligand>
</feature>
<feature type="binding site" evidence="1">
    <location>
        <position position="197"/>
    </location>
    <ligand>
        <name>[4Fe-4S] cluster</name>
        <dbReference type="ChEBI" id="CHEBI:49883"/>
    </ligand>
</feature>
<feature type="binding site" evidence="1">
    <location>
        <position position="225"/>
    </location>
    <ligand>
        <name>(2E)-4-hydroxy-3-methylbut-2-enyl diphosphate</name>
        <dbReference type="ChEBI" id="CHEBI:128753"/>
    </ligand>
</feature>
<feature type="binding site" evidence="1">
    <location>
        <position position="225"/>
    </location>
    <ligand>
        <name>dimethylallyl diphosphate</name>
        <dbReference type="ChEBI" id="CHEBI:57623"/>
    </ligand>
</feature>
<feature type="binding site" evidence="1">
    <location>
        <position position="225"/>
    </location>
    <ligand>
        <name>isopentenyl diphosphate</name>
        <dbReference type="ChEBI" id="CHEBI:128769"/>
    </ligand>
</feature>
<feature type="binding site" evidence="1">
    <location>
        <position position="226"/>
    </location>
    <ligand>
        <name>(2E)-4-hydroxy-3-methylbut-2-enyl diphosphate</name>
        <dbReference type="ChEBI" id="CHEBI:128753"/>
    </ligand>
</feature>
<feature type="binding site" evidence="1">
    <location>
        <position position="226"/>
    </location>
    <ligand>
        <name>dimethylallyl diphosphate</name>
        <dbReference type="ChEBI" id="CHEBI:57623"/>
    </ligand>
</feature>
<feature type="binding site" evidence="1">
    <location>
        <position position="226"/>
    </location>
    <ligand>
        <name>isopentenyl diphosphate</name>
        <dbReference type="ChEBI" id="CHEBI:128769"/>
    </ligand>
</feature>
<feature type="binding site" evidence="1">
    <location>
        <position position="227"/>
    </location>
    <ligand>
        <name>(2E)-4-hydroxy-3-methylbut-2-enyl diphosphate</name>
        <dbReference type="ChEBI" id="CHEBI:128753"/>
    </ligand>
</feature>
<feature type="binding site" evidence="1">
    <location>
        <position position="227"/>
    </location>
    <ligand>
        <name>dimethylallyl diphosphate</name>
        <dbReference type="ChEBI" id="CHEBI:57623"/>
    </ligand>
</feature>
<feature type="binding site" evidence="1">
    <location>
        <position position="227"/>
    </location>
    <ligand>
        <name>isopentenyl diphosphate</name>
        <dbReference type="ChEBI" id="CHEBI:128769"/>
    </ligand>
</feature>
<feature type="binding site" evidence="1">
    <location>
        <position position="269"/>
    </location>
    <ligand>
        <name>(2E)-4-hydroxy-3-methylbut-2-enyl diphosphate</name>
        <dbReference type="ChEBI" id="CHEBI:128753"/>
    </ligand>
</feature>
<feature type="binding site" evidence="1">
    <location>
        <position position="269"/>
    </location>
    <ligand>
        <name>dimethylallyl diphosphate</name>
        <dbReference type="ChEBI" id="CHEBI:57623"/>
    </ligand>
</feature>
<feature type="binding site" evidence="1">
    <location>
        <position position="269"/>
    </location>
    <ligand>
        <name>isopentenyl diphosphate</name>
        <dbReference type="ChEBI" id="CHEBI:128769"/>
    </ligand>
</feature>
<name>ISPH_SALHS</name>
<reference key="1">
    <citation type="journal article" date="2011" name="J. Bacteriol.">
        <title>Comparative genomics of 28 Salmonella enterica isolates: evidence for CRISPR-mediated adaptive sublineage evolution.</title>
        <authorList>
            <person name="Fricke W.F."/>
            <person name="Mammel M.K."/>
            <person name="McDermott P.F."/>
            <person name="Tartera C."/>
            <person name="White D.G."/>
            <person name="Leclerc J.E."/>
            <person name="Ravel J."/>
            <person name="Cebula T.A."/>
        </authorList>
    </citation>
    <scope>NUCLEOTIDE SEQUENCE [LARGE SCALE GENOMIC DNA]</scope>
    <source>
        <strain>SL476</strain>
    </source>
</reference>
<proteinExistence type="inferred from homology"/>
<sequence length="316" mass="34527">MQILLANPRGFCAGVDRAISIVENALAIYGAPIYVRHEVVHNRYVVDSLRQRGAIFIEQISEVPDGAILIFSAHGVSQAVRNEAKSRDLTVFDATCPLVTKVHMEVARASRRGEESILIGHAGHPEVEGTMGQYSNPEGGMYLVESPEDVWTLNVKNEGKLSFMTQTTLSVDDTSDVIDALRKRFPKIVGPRKDDICYATTNRQEAVRALAEQADVVLVVGSKNSSNSNRLAELAQRMGRTAFLIDDAADIQEAWVKEAACVGVTAGASAPDILVQNVIARLREFGGGEAVTLEGREENIVFEVPKELRVDVREVE</sequence>
<gene>
    <name evidence="1" type="primary">ispH</name>
    <name type="ordered locus">SeHA_C0053</name>
</gene>
<evidence type="ECO:0000255" key="1">
    <source>
        <dbReference type="HAMAP-Rule" id="MF_00191"/>
    </source>
</evidence>
<protein>
    <recommendedName>
        <fullName evidence="1">4-hydroxy-3-methylbut-2-enyl diphosphate reductase</fullName>
        <shortName evidence="1">HMBPP reductase</shortName>
        <ecNumber evidence="1">1.17.7.4</ecNumber>
    </recommendedName>
</protein>
<dbReference type="EC" id="1.17.7.4" evidence="1"/>
<dbReference type="EMBL" id="CP001120">
    <property type="protein sequence ID" value="ACF68506.1"/>
    <property type="molecule type" value="Genomic_DNA"/>
</dbReference>
<dbReference type="RefSeq" id="WP_001166428.1">
    <property type="nucleotide sequence ID" value="NC_011083.1"/>
</dbReference>
<dbReference type="SMR" id="B4TIE9"/>
<dbReference type="KEGG" id="seh:SeHA_C0053"/>
<dbReference type="HOGENOM" id="CLU_027486_1_0_6"/>
<dbReference type="UniPathway" id="UPA00056">
    <property type="reaction ID" value="UER00097"/>
</dbReference>
<dbReference type="UniPathway" id="UPA00059">
    <property type="reaction ID" value="UER00105"/>
</dbReference>
<dbReference type="Proteomes" id="UP000001866">
    <property type="component" value="Chromosome"/>
</dbReference>
<dbReference type="GO" id="GO:0051539">
    <property type="term" value="F:4 iron, 4 sulfur cluster binding"/>
    <property type="evidence" value="ECO:0007669"/>
    <property type="project" value="UniProtKB-UniRule"/>
</dbReference>
<dbReference type="GO" id="GO:0051745">
    <property type="term" value="F:4-hydroxy-3-methylbut-2-enyl diphosphate reductase activity"/>
    <property type="evidence" value="ECO:0007669"/>
    <property type="project" value="UniProtKB-UniRule"/>
</dbReference>
<dbReference type="GO" id="GO:0046872">
    <property type="term" value="F:metal ion binding"/>
    <property type="evidence" value="ECO:0007669"/>
    <property type="project" value="UniProtKB-KW"/>
</dbReference>
<dbReference type="GO" id="GO:0050992">
    <property type="term" value="P:dimethylallyl diphosphate biosynthetic process"/>
    <property type="evidence" value="ECO:0007669"/>
    <property type="project" value="UniProtKB-UniRule"/>
</dbReference>
<dbReference type="GO" id="GO:0019288">
    <property type="term" value="P:isopentenyl diphosphate biosynthetic process, methylerythritol 4-phosphate pathway"/>
    <property type="evidence" value="ECO:0007669"/>
    <property type="project" value="UniProtKB-UniRule"/>
</dbReference>
<dbReference type="GO" id="GO:0016114">
    <property type="term" value="P:terpenoid biosynthetic process"/>
    <property type="evidence" value="ECO:0007669"/>
    <property type="project" value="UniProtKB-UniRule"/>
</dbReference>
<dbReference type="CDD" id="cd13944">
    <property type="entry name" value="lytB_ispH"/>
    <property type="match status" value="1"/>
</dbReference>
<dbReference type="FunFam" id="3.40.1010.20:FF:000001">
    <property type="entry name" value="4-hydroxy-3-methylbut-2-enyl diphosphate reductase"/>
    <property type="match status" value="1"/>
</dbReference>
<dbReference type="FunFam" id="3.40.50.11270:FF:000001">
    <property type="entry name" value="4-hydroxy-3-methylbut-2-enyl diphosphate reductase"/>
    <property type="match status" value="1"/>
</dbReference>
<dbReference type="Gene3D" id="3.40.50.11270">
    <property type="match status" value="1"/>
</dbReference>
<dbReference type="Gene3D" id="3.40.1010.20">
    <property type="entry name" value="4-hydroxy-3-methylbut-2-enyl diphosphate reductase, catalytic domain"/>
    <property type="match status" value="2"/>
</dbReference>
<dbReference type="HAMAP" id="MF_00191">
    <property type="entry name" value="IspH"/>
    <property type="match status" value="1"/>
</dbReference>
<dbReference type="InterPro" id="IPR003451">
    <property type="entry name" value="LytB/IspH"/>
</dbReference>
<dbReference type="NCBIfam" id="TIGR00216">
    <property type="entry name" value="ispH_lytB"/>
    <property type="match status" value="1"/>
</dbReference>
<dbReference type="NCBIfam" id="NF002188">
    <property type="entry name" value="PRK01045.1-2"/>
    <property type="match status" value="1"/>
</dbReference>
<dbReference type="NCBIfam" id="NF002190">
    <property type="entry name" value="PRK01045.1-4"/>
    <property type="match status" value="1"/>
</dbReference>
<dbReference type="PANTHER" id="PTHR30426">
    <property type="entry name" value="4-HYDROXY-3-METHYLBUT-2-ENYL DIPHOSPHATE REDUCTASE"/>
    <property type="match status" value="1"/>
</dbReference>
<dbReference type="PANTHER" id="PTHR30426:SF0">
    <property type="entry name" value="4-HYDROXY-3-METHYLBUT-2-ENYL DIPHOSPHATE REDUCTASE"/>
    <property type="match status" value="1"/>
</dbReference>
<dbReference type="Pfam" id="PF02401">
    <property type="entry name" value="LYTB"/>
    <property type="match status" value="1"/>
</dbReference>
<organism>
    <name type="scientific">Salmonella heidelberg (strain SL476)</name>
    <dbReference type="NCBI Taxonomy" id="454169"/>
    <lineage>
        <taxon>Bacteria</taxon>
        <taxon>Pseudomonadati</taxon>
        <taxon>Pseudomonadota</taxon>
        <taxon>Gammaproteobacteria</taxon>
        <taxon>Enterobacterales</taxon>
        <taxon>Enterobacteriaceae</taxon>
        <taxon>Salmonella</taxon>
    </lineage>
</organism>